<feature type="chain" id="PRO_0000391760" description="SrfA-induced gene G protein">
    <location>
        <begin position="1"/>
        <end position="425"/>
    </location>
</feature>
<feature type="transmembrane region" description="Helical" evidence="1">
    <location>
        <begin position="91"/>
        <end position="113"/>
    </location>
</feature>
<feature type="region of interest" description="Disordered" evidence="2">
    <location>
        <begin position="393"/>
        <end position="413"/>
    </location>
</feature>
<feature type="coiled-coil region" evidence="1">
    <location>
        <begin position="41"/>
        <end position="91"/>
    </location>
</feature>
<feature type="coiled-coil region" evidence="1">
    <location>
        <begin position="172"/>
        <end position="208"/>
    </location>
</feature>
<feature type="coiled-coil region" evidence="1">
    <location>
        <begin position="292"/>
        <end position="340"/>
    </location>
</feature>
<feature type="glycosylation site" description="N-linked (GlcNAc...) asparagine" evidence="1">
    <location>
        <position position="25"/>
    </location>
</feature>
<feature type="glycosylation site" description="N-linked (GlcNAc...) asparagine" evidence="1">
    <location>
        <position position="28"/>
    </location>
</feature>
<feature type="glycosylation site" description="N-linked (GlcNAc...) asparagine" evidence="1">
    <location>
        <position position="36"/>
    </location>
</feature>
<feature type="sequence conflict" description="In Ref. 1; AAQ98870." evidence="6" ref="1">
    <original>Q</original>
    <variation>H</variation>
    <location>
        <position position="188"/>
    </location>
</feature>
<gene>
    <name type="primary">sigG</name>
    <name type="ORF">DDB_G0290071</name>
</gene>
<keyword id="KW-0175">Coiled coil</keyword>
<keyword id="KW-0325">Glycoprotein</keyword>
<keyword id="KW-0472">Membrane</keyword>
<keyword id="KW-1185">Reference proteome</keyword>
<keyword id="KW-0812">Transmembrane</keyword>
<keyword id="KW-1133">Transmembrane helix</keyword>
<proteinExistence type="evidence at transcript level"/>
<evidence type="ECO:0000255" key="1"/>
<evidence type="ECO:0000256" key="2">
    <source>
        <dbReference type="SAM" id="MobiDB-lite"/>
    </source>
</evidence>
<evidence type="ECO:0000269" key="3">
    <source>
    </source>
</evidence>
<evidence type="ECO:0000269" key="4">
    <source>
    </source>
</evidence>
<evidence type="ECO:0000269" key="5">
    <source>
    </source>
</evidence>
<evidence type="ECO:0000305" key="6"/>
<protein>
    <recommendedName>
        <fullName>SrfA-induced gene G protein</fullName>
    </recommendedName>
</protein>
<comment type="subcellular location">
    <subcellularLocation>
        <location evidence="6">Membrane</location>
        <topology evidence="6">Single-pass membrane protein</topology>
    </subcellularLocation>
</comment>
<comment type="developmental stage">
    <text evidence="3 5">Expressed late in development.</text>
</comment>
<comment type="induction">
    <text evidence="3 4 5">Induced by srfA, during development. Down-regulated in grlA null-cells at 16 hours of starvation. Rapidly up-regulated by hyperosmotic stress, which is dependent on dstC. Shows early transcriptional response to sorbitol exposure.</text>
</comment>
<accession>Q54GL3</accession>
<accession>Q6TMK5</accession>
<sequence>MSTPTRTKKLIVSPTSVRKRVQNQNLTNTTYSTNSNSSRYRDSEENFLNRQQQELKQLHDQQLYELQELQEQQINEIEELSKQRSNTRIRNVFKVLITILVGSIIYGTYTNQFQPNPIEPFHLTEPIGQTWLHSLKDISTNWYHIWSDSFKDLARIKPLSESQTMPAGHRLHEKQILEKTLRRHQQEQDNNNNNKKTIENQMERMKRTDLERAIKEKTFFLDPTHYVNEEMIKQEIERQLKPHPGAPTPYNKDVYNSQNIYYPSSDAIPMVREKIENLENKVLDSVDEAIYKFGQKSKELLHNIQEKKEQIKEKLNDEPSNIEKEFNSLIKEIEKANYNIFKDLKDNYGEPTIEKLNELRYKFNDAARESREVIKNKIESAQAIEQELAKNLKKPHADSNGHPKPYPHHHLLNQENQIDENLIIV</sequence>
<name>SIGG_DICDI</name>
<organism>
    <name type="scientific">Dictyostelium discoideum</name>
    <name type="common">Social amoeba</name>
    <dbReference type="NCBI Taxonomy" id="44689"/>
    <lineage>
        <taxon>Eukaryota</taxon>
        <taxon>Amoebozoa</taxon>
        <taxon>Evosea</taxon>
        <taxon>Eumycetozoa</taxon>
        <taxon>Dictyostelia</taxon>
        <taxon>Dictyosteliales</taxon>
        <taxon>Dictyosteliaceae</taxon>
        <taxon>Dictyostelium</taxon>
    </lineage>
</organism>
<reference key="1">
    <citation type="journal article" date="2004" name="Eukaryot. Cell">
        <title>Identification of genes dependent on the MADS box transcription factor SrfA in Dictyostelium discoideum development.</title>
        <authorList>
            <person name="Escalante R."/>
            <person name="Iranfar N."/>
            <person name="Sastre L."/>
            <person name="Loomis W.F."/>
        </authorList>
    </citation>
    <scope>NUCLEOTIDE SEQUENCE [GENOMIC DNA]</scope>
    <scope>DEVELOPMENTAL STAGE</scope>
    <scope>INDUCTION BY SRFA</scope>
</reference>
<reference key="2">
    <citation type="journal article" date="2005" name="Nature">
        <title>The genome of the social amoeba Dictyostelium discoideum.</title>
        <authorList>
            <person name="Eichinger L."/>
            <person name="Pachebat J.A."/>
            <person name="Gloeckner G."/>
            <person name="Rajandream M.A."/>
            <person name="Sucgang R."/>
            <person name="Berriman M."/>
            <person name="Song J."/>
            <person name="Olsen R."/>
            <person name="Szafranski K."/>
            <person name="Xu Q."/>
            <person name="Tunggal B."/>
            <person name="Kummerfeld S."/>
            <person name="Madera M."/>
            <person name="Konfortov B.A."/>
            <person name="Rivero F."/>
            <person name="Bankier A.T."/>
            <person name="Lehmann R."/>
            <person name="Hamlin N."/>
            <person name="Davies R."/>
            <person name="Gaudet P."/>
            <person name="Fey P."/>
            <person name="Pilcher K."/>
            <person name="Chen G."/>
            <person name="Saunders D."/>
            <person name="Sodergren E.J."/>
            <person name="Davis P."/>
            <person name="Kerhornou A."/>
            <person name="Nie X."/>
            <person name="Hall N."/>
            <person name="Anjard C."/>
            <person name="Hemphill L."/>
            <person name="Bason N."/>
            <person name="Farbrother P."/>
            <person name="Desany B."/>
            <person name="Just E."/>
            <person name="Morio T."/>
            <person name="Rost R."/>
            <person name="Churcher C.M."/>
            <person name="Cooper J."/>
            <person name="Haydock S."/>
            <person name="van Driessche N."/>
            <person name="Cronin A."/>
            <person name="Goodhead I."/>
            <person name="Muzny D.M."/>
            <person name="Mourier T."/>
            <person name="Pain A."/>
            <person name="Lu M."/>
            <person name="Harper D."/>
            <person name="Lindsay R."/>
            <person name="Hauser H."/>
            <person name="James K.D."/>
            <person name="Quiles M."/>
            <person name="Madan Babu M."/>
            <person name="Saito T."/>
            <person name="Buchrieser C."/>
            <person name="Wardroper A."/>
            <person name="Felder M."/>
            <person name="Thangavelu M."/>
            <person name="Johnson D."/>
            <person name="Knights A."/>
            <person name="Loulseged H."/>
            <person name="Mungall K.L."/>
            <person name="Oliver K."/>
            <person name="Price C."/>
            <person name="Quail M.A."/>
            <person name="Urushihara H."/>
            <person name="Hernandez J."/>
            <person name="Rabbinowitsch E."/>
            <person name="Steffen D."/>
            <person name="Sanders M."/>
            <person name="Ma J."/>
            <person name="Kohara Y."/>
            <person name="Sharp S."/>
            <person name="Simmonds M.N."/>
            <person name="Spiegler S."/>
            <person name="Tivey A."/>
            <person name="Sugano S."/>
            <person name="White B."/>
            <person name="Walker D."/>
            <person name="Woodward J.R."/>
            <person name="Winckler T."/>
            <person name="Tanaka Y."/>
            <person name="Shaulsky G."/>
            <person name="Schleicher M."/>
            <person name="Weinstock G.M."/>
            <person name="Rosenthal A."/>
            <person name="Cox E.C."/>
            <person name="Chisholm R.L."/>
            <person name="Gibbs R.A."/>
            <person name="Loomis W.F."/>
            <person name="Platzer M."/>
            <person name="Kay R.R."/>
            <person name="Williams J.G."/>
            <person name="Dear P.H."/>
            <person name="Noegel A.A."/>
            <person name="Barrell B.G."/>
            <person name="Kuspa A."/>
        </authorList>
    </citation>
    <scope>NUCLEOTIDE SEQUENCE [LARGE SCALE GENOMIC DNA]</scope>
    <source>
        <strain>AX4</strain>
    </source>
</reference>
<reference key="3">
    <citation type="journal article" date="2007" name="BMC Genomics">
        <title>STATc is a key regulator of the transcriptional response to hyperosmotic shock.</title>
        <authorList>
            <person name="Na J."/>
            <person name="Tunggal B."/>
            <person name="Eichinger L."/>
        </authorList>
    </citation>
    <scope>INDUCTION [LARGE SCALE ANALYSIS]</scope>
</reference>
<reference key="4">
    <citation type="journal article" date="2007" name="Dev. Biol.">
        <title>A GPCR involved in post aggregation events in Dictyostelium discoideum.</title>
        <authorList>
            <person name="Prabhu Y."/>
            <person name="Mondal S."/>
            <person name="Eichinger L."/>
            <person name="Noegel A.A."/>
        </authorList>
    </citation>
    <scope>DEVELOPMENTAL STAGE</scope>
    <scope>INDUCTION [LARGE SCALE ANALYSIS]</scope>
</reference>
<dbReference type="EMBL" id="AY392428">
    <property type="protein sequence ID" value="AAQ98870.1"/>
    <property type="molecule type" value="Genomic_DNA"/>
</dbReference>
<dbReference type="EMBL" id="AAFI02000152">
    <property type="protein sequence ID" value="EAL62396.1"/>
    <property type="molecule type" value="Genomic_DNA"/>
</dbReference>
<dbReference type="RefSeq" id="XP_635904.1">
    <property type="nucleotide sequence ID" value="XM_630812.1"/>
</dbReference>
<dbReference type="SMR" id="Q54GL3"/>
<dbReference type="FunCoup" id="Q54GL3">
    <property type="interactions" value="108"/>
</dbReference>
<dbReference type="STRING" id="44689.Q54GL3"/>
<dbReference type="GlyCosmos" id="Q54GL3">
    <property type="glycosylation" value="3 sites, No reported glycans"/>
</dbReference>
<dbReference type="GlyGen" id="Q54GL3">
    <property type="glycosylation" value="3 sites"/>
</dbReference>
<dbReference type="PaxDb" id="44689-DDB0191392"/>
<dbReference type="EnsemblProtists" id="EAL62396">
    <property type="protein sequence ID" value="EAL62396"/>
    <property type="gene ID" value="DDB_G0290071"/>
</dbReference>
<dbReference type="GeneID" id="8627470"/>
<dbReference type="KEGG" id="ddi:DDB_G0290071"/>
<dbReference type="dictyBase" id="DDB_G0290071">
    <property type="gene designation" value="sigG"/>
</dbReference>
<dbReference type="VEuPathDB" id="AmoebaDB:DDB_G0290071"/>
<dbReference type="HOGENOM" id="CLU_646293_0_0_1"/>
<dbReference type="InParanoid" id="Q54GL3"/>
<dbReference type="OMA" id="QTMPAGH"/>
<dbReference type="PRO" id="PR:Q54GL3"/>
<dbReference type="Proteomes" id="UP000002195">
    <property type="component" value="Chromosome 5"/>
</dbReference>
<dbReference type="GO" id="GO:0016020">
    <property type="term" value="C:membrane"/>
    <property type="evidence" value="ECO:0007669"/>
    <property type="project" value="UniProtKB-SubCell"/>
</dbReference>